<organismHost>
    <name type="scientific">Ornithodoros</name>
    <name type="common">relapsing fever ticks</name>
    <dbReference type="NCBI Taxonomy" id="6937"/>
</organismHost>
<organismHost>
    <name type="scientific">Phacochoerus aethiopicus</name>
    <name type="common">Warthog</name>
    <dbReference type="NCBI Taxonomy" id="85517"/>
</organismHost>
<organismHost>
    <name type="scientific">Phacochoerus africanus</name>
    <name type="common">Warthog</name>
    <dbReference type="NCBI Taxonomy" id="41426"/>
</organismHost>
<organismHost>
    <name type="scientific">Potamochoerus larvatus</name>
    <name type="common">Bushpig</name>
    <dbReference type="NCBI Taxonomy" id="273792"/>
</organismHost>
<organismHost>
    <name type="scientific">Sus scrofa</name>
    <name type="common">Pig</name>
    <dbReference type="NCBI Taxonomy" id="9823"/>
</organismHost>
<comment type="function">
    <text evidence="1">Plays a role in the inhibition of the host innate immune response. Mechanistically, promotes the autophagy-mediated lysosomal degradation of host TBK1 and affects IRF3 nuclear translocation to block type I IFN production.</text>
</comment>
<comment type="subunit">
    <text evidence="1">Interacts with host TBK1.</text>
</comment>
<comment type="subcellular location">
    <subcellularLocation>
        <location evidence="1">Virion</location>
    </subcellularLocation>
    <subcellularLocation>
        <location evidence="1">Host cytoplasm</location>
    </subcellularLocation>
</comment>
<comment type="induction">
    <text evidence="2">Expressed in the late phase of the viral replicative cycle.</text>
</comment>
<comment type="similarity">
    <text evidence="2">Belongs to the asfivirus A137R family.</text>
</comment>
<accession>P0CA45</accession>
<feature type="chain" id="PRO_0000373516" description="Structural protein A137R">
    <location>
        <begin position="1"/>
        <end position="137"/>
    </location>
</feature>
<organism>
    <name type="scientific">African swine fever virus (isolate Tick/Malawi/Lil 20-1/1983)</name>
    <name type="common">ASFV</name>
    <dbReference type="NCBI Taxonomy" id="10500"/>
    <lineage>
        <taxon>Viruses</taxon>
        <taxon>Varidnaviria</taxon>
        <taxon>Bamfordvirae</taxon>
        <taxon>Nucleocytoviricota</taxon>
        <taxon>Pokkesviricetes</taxon>
        <taxon>Asfuvirales</taxon>
        <taxon>Asfarviridae</taxon>
        <taxon>Asfivirus</taxon>
        <taxon>African swine fever virus</taxon>
    </lineage>
</organism>
<reference key="1">
    <citation type="submission" date="2003-03" db="EMBL/GenBank/DDBJ databases">
        <title>African swine fever virus genomes.</title>
        <authorList>
            <person name="Kutish G.F."/>
            <person name="Rock D.L."/>
        </authorList>
    </citation>
    <scope>NUCLEOTIDE SEQUENCE [LARGE SCALE GENOMIC DNA]</scope>
</reference>
<sequence>MEAALTKLDQEEKRALQAYYRCAWEETKNIINDFLEIPEERCTYKLNSYTKKMELLFTPEFHTAWQEVFECREFIINFLRLITGHRVVLKGPAIVFTKETKNLGIPSTINVDFQANIENMDDLQKGNLIGKMNIKEN</sequence>
<name>VF137_ASFM2</name>
<keyword id="KW-1035">Host cytoplasm</keyword>
<keyword id="KW-0426">Late protein</keyword>
<keyword id="KW-0946">Virion</keyword>
<gene>
    <name type="ordered locus">Mal-050</name>
</gene>
<dbReference type="EMBL" id="AY261361">
    <property type="status" value="NOT_ANNOTATED_CDS"/>
    <property type="molecule type" value="Genomic_DNA"/>
</dbReference>
<dbReference type="SMR" id="P0CA45"/>
<dbReference type="Proteomes" id="UP000000860">
    <property type="component" value="Segment"/>
</dbReference>
<dbReference type="GO" id="GO:0030430">
    <property type="term" value="C:host cell cytoplasm"/>
    <property type="evidence" value="ECO:0007669"/>
    <property type="project" value="UniProtKB-SubCell"/>
</dbReference>
<dbReference type="GO" id="GO:0044423">
    <property type="term" value="C:virion component"/>
    <property type="evidence" value="ECO:0007669"/>
    <property type="project" value="UniProtKB-KW"/>
</dbReference>
<proteinExistence type="inferred from homology"/>
<protein>
    <recommendedName>
        <fullName>Structural protein A137R</fullName>
    </recommendedName>
</protein>
<evidence type="ECO:0000250" key="1">
    <source>
        <dbReference type="UniProtKB" id="Q07344"/>
    </source>
</evidence>
<evidence type="ECO:0000305" key="2"/>